<feature type="chain" id="PRO_1000165422" description="Small ribosomal subunit protein uS4">
    <location>
        <begin position="1"/>
        <end position="206"/>
    </location>
</feature>
<feature type="domain" description="S4 RNA-binding" evidence="1">
    <location>
        <begin position="94"/>
        <end position="154"/>
    </location>
</feature>
<feature type="region of interest" description="Disordered" evidence="2">
    <location>
        <begin position="15"/>
        <end position="46"/>
    </location>
</feature>
<proteinExistence type="inferred from homology"/>
<protein>
    <recommendedName>
        <fullName evidence="1">Small ribosomal subunit protein uS4</fullName>
    </recommendedName>
    <alternativeName>
        <fullName evidence="3">30S ribosomal protein S4</fullName>
    </alternativeName>
</protein>
<keyword id="KW-0687">Ribonucleoprotein</keyword>
<keyword id="KW-0689">Ribosomal protein</keyword>
<keyword id="KW-0694">RNA-binding</keyword>
<keyword id="KW-0699">rRNA-binding</keyword>
<organism>
    <name type="scientific">Cereibacter sphaeroides (strain KD131 / KCTC 12085)</name>
    <name type="common">Rhodobacter sphaeroides</name>
    <dbReference type="NCBI Taxonomy" id="557760"/>
    <lineage>
        <taxon>Bacteria</taxon>
        <taxon>Pseudomonadati</taxon>
        <taxon>Pseudomonadota</taxon>
        <taxon>Alphaproteobacteria</taxon>
        <taxon>Rhodobacterales</taxon>
        <taxon>Paracoccaceae</taxon>
        <taxon>Cereibacter</taxon>
    </lineage>
</organism>
<sequence>MTKRTSAKYKIDRRMGENIWGRPKSPVNKREYGPGQHGQRRKNKLSDFGTQLRAKQKLKGYYGDLTEKQFRKIFAEAERVKGDTGEMLVGLLERRLDAIVYRAKFVPTIFAARQFVNHGHVTVNGQRVNIGSYRCKEGDVIQVREKSRQLALVLEATQLAERDVPDYIEVDYSKMTATFVRTPGLGDVPYPVQMEPNLVVEFYAKN</sequence>
<evidence type="ECO:0000255" key="1">
    <source>
        <dbReference type="HAMAP-Rule" id="MF_01306"/>
    </source>
</evidence>
<evidence type="ECO:0000256" key="2">
    <source>
        <dbReference type="SAM" id="MobiDB-lite"/>
    </source>
</evidence>
<evidence type="ECO:0000305" key="3"/>
<reference key="1">
    <citation type="journal article" date="2009" name="J. Bacteriol.">
        <title>Complete genome sequence of Rhodobacter sphaeroides KD131.</title>
        <authorList>
            <person name="Lim S.-K."/>
            <person name="Kim S.J."/>
            <person name="Cha S.H."/>
            <person name="Oh Y.-K."/>
            <person name="Rhee H.-J."/>
            <person name="Kim M.-S."/>
            <person name="Lee J.K."/>
        </authorList>
    </citation>
    <scope>NUCLEOTIDE SEQUENCE [LARGE SCALE GENOMIC DNA]</scope>
    <source>
        <strain>KD131 / KCTC 12085</strain>
    </source>
</reference>
<dbReference type="EMBL" id="CP001150">
    <property type="protein sequence ID" value="ACM00466.1"/>
    <property type="molecule type" value="Genomic_DNA"/>
</dbReference>
<dbReference type="RefSeq" id="WP_002719445.1">
    <property type="nucleotide sequence ID" value="NC_011963.1"/>
</dbReference>
<dbReference type="SMR" id="B9KPH3"/>
<dbReference type="GeneID" id="67446056"/>
<dbReference type="KEGG" id="rsk:RSKD131_0606"/>
<dbReference type="HOGENOM" id="CLU_092403_0_0_5"/>
<dbReference type="GO" id="GO:0015935">
    <property type="term" value="C:small ribosomal subunit"/>
    <property type="evidence" value="ECO:0007669"/>
    <property type="project" value="InterPro"/>
</dbReference>
<dbReference type="GO" id="GO:0019843">
    <property type="term" value="F:rRNA binding"/>
    <property type="evidence" value="ECO:0007669"/>
    <property type="project" value="UniProtKB-UniRule"/>
</dbReference>
<dbReference type="GO" id="GO:0003735">
    <property type="term" value="F:structural constituent of ribosome"/>
    <property type="evidence" value="ECO:0007669"/>
    <property type="project" value="InterPro"/>
</dbReference>
<dbReference type="GO" id="GO:0042274">
    <property type="term" value="P:ribosomal small subunit biogenesis"/>
    <property type="evidence" value="ECO:0007669"/>
    <property type="project" value="TreeGrafter"/>
</dbReference>
<dbReference type="GO" id="GO:0006412">
    <property type="term" value="P:translation"/>
    <property type="evidence" value="ECO:0007669"/>
    <property type="project" value="UniProtKB-UniRule"/>
</dbReference>
<dbReference type="CDD" id="cd00165">
    <property type="entry name" value="S4"/>
    <property type="match status" value="1"/>
</dbReference>
<dbReference type="FunFam" id="3.10.290.10:FF:000001">
    <property type="entry name" value="30S ribosomal protein S4"/>
    <property type="match status" value="1"/>
</dbReference>
<dbReference type="Gene3D" id="1.10.1050.10">
    <property type="entry name" value="Ribosomal Protein S4 Delta 41, Chain A, domain 1"/>
    <property type="match status" value="1"/>
</dbReference>
<dbReference type="Gene3D" id="3.10.290.10">
    <property type="entry name" value="RNA-binding S4 domain"/>
    <property type="match status" value="1"/>
</dbReference>
<dbReference type="HAMAP" id="MF_01306_B">
    <property type="entry name" value="Ribosomal_uS4_B"/>
    <property type="match status" value="1"/>
</dbReference>
<dbReference type="InterPro" id="IPR022801">
    <property type="entry name" value="Ribosomal_uS4"/>
</dbReference>
<dbReference type="InterPro" id="IPR005709">
    <property type="entry name" value="Ribosomal_uS4_bac-type"/>
</dbReference>
<dbReference type="InterPro" id="IPR018079">
    <property type="entry name" value="Ribosomal_uS4_CS"/>
</dbReference>
<dbReference type="InterPro" id="IPR001912">
    <property type="entry name" value="Ribosomal_uS4_N"/>
</dbReference>
<dbReference type="InterPro" id="IPR002942">
    <property type="entry name" value="S4_RNA-bd"/>
</dbReference>
<dbReference type="InterPro" id="IPR036986">
    <property type="entry name" value="S4_RNA-bd_sf"/>
</dbReference>
<dbReference type="NCBIfam" id="NF003717">
    <property type="entry name" value="PRK05327.1"/>
    <property type="match status" value="1"/>
</dbReference>
<dbReference type="NCBIfam" id="TIGR01017">
    <property type="entry name" value="rpsD_bact"/>
    <property type="match status" value="1"/>
</dbReference>
<dbReference type="PANTHER" id="PTHR11831">
    <property type="entry name" value="30S 40S RIBOSOMAL PROTEIN"/>
    <property type="match status" value="1"/>
</dbReference>
<dbReference type="PANTHER" id="PTHR11831:SF4">
    <property type="entry name" value="SMALL RIBOSOMAL SUBUNIT PROTEIN US4M"/>
    <property type="match status" value="1"/>
</dbReference>
<dbReference type="Pfam" id="PF00163">
    <property type="entry name" value="Ribosomal_S4"/>
    <property type="match status" value="1"/>
</dbReference>
<dbReference type="Pfam" id="PF01479">
    <property type="entry name" value="S4"/>
    <property type="match status" value="1"/>
</dbReference>
<dbReference type="SMART" id="SM01390">
    <property type="entry name" value="Ribosomal_S4"/>
    <property type="match status" value="1"/>
</dbReference>
<dbReference type="SMART" id="SM00363">
    <property type="entry name" value="S4"/>
    <property type="match status" value="1"/>
</dbReference>
<dbReference type="SUPFAM" id="SSF55174">
    <property type="entry name" value="Alpha-L RNA-binding motif"/>
    <property type="match status" value="1"/>
</dbReference>
<dbReference type="PROSITE" id="PS00632">
    <property type="entry name" value="RIBOSOMAL_S4"/>
    <property type="match status" value="1"/>
</dbReference>
<dbReference type="PROSITE" id="PS50889">
    <property type="entry name" value="S4"/>
    <property type="match status" value="1"/>
</dbReference>
<name>RS4_CERSK</name>
<comment type="function">
    <text evidence="1">One of the primary rRNA binding proteins, it binds directly to 16S rRNA where it nucleates assembly of the body of the 30S subunit.</text>
</comment>
<comment type="function">
    <text evidence="1">With S5 and S12 plays an important role in translational accuracy.</text>
</comment>
<comment type="subunit">
    <text evidence="1">Part of the 30S ribosomal subunit. Contacts protein S5. The interaction surface between S4 and S5 is involved in control of translational fidelity.</text>
</comment>
<comment type="similarity">
    <text evidence="1">Belongs to the universal ribosomal protein uS4 family.</text>
</comment>
<accession>B9KPH3</accession>
<gene>
    <name evidence="1" type="primary">rpsD</name>
    <name type="ordered locus">RSKD131_0606</name>
</gene>